<sequence length="263" mass="28298">MQAEILLTLKLQQRLFADPRRIALLKQIQHTGSISQGAKLAGISYKSAWDAINDMNTLSEEILVERATGGKGGGGAHLTRYGERLIQLYDLLATIQQKAFDTLKDDSLPLDSLLAAISRFSLQTSARNQFFGTLIERDHQQVQQHVNILLSDGKTRLTAAITQQSADRLQLSAGKEVLALIKAPWVKLVTDPALAGAADNALPGTVASIEPGNDHSEVIVTLTGGANLCSTQNNSELHALNLRVGSAVIAQFNADRVIIATLC</sequence>
<keyword id="KW-0010">Activator</keyword>
<keyword id="KW-0963">Cytoplasm</keyword>
<keyword id="KW-0238">DNA-binding</keyword>
<keyword id="KW-0500">Molybdenum</keyword>
<keyword id="KW-1185">Reference proteome</keyword>
<keyword id="KW-0677">Repeat</keyword>
<keyword id="KW-0678">Repressor</keyword>
<keyword id="KW-0804">Transcription</keyword>
<keyword id="KW-0805">Transcription regulation</keyword>
<keyword id="KW-0813">Transport</keyword>
<gene>
    <name type="primary">modE</name>
    <name type="ordered locus">YPO1143</name>
    <name type="ordered locus">y3040</name>
    <name type="ordered locus">YP_1017</name>
</gene>
<evidence type="ECO:0000250" key="1"/>
<evidence type="ECO:0000255" key="2">
    <source>
        <dbReference type="PROSITE-ProRule" id="PRU01213"/>
    </source>
</evidence>
<evidence type="ECO:0000305" key="3"/>
<dbReference type="EMBL" id="AL590842">
    <property type="protein sequence ID" value="CAL19807.1"/>
    <property type="molecule type" value="Genomic_DNA"/>
</dbReference>
<dbReference type="EMBL" id="AE009952">
    <property type="protein sequence ID" value="AAM86590.1"/>
    <property type="status" value="ALT_INIT"/>
    <property type="molecule type" value="Genomic_DNA"/>
</dbReference>
<dbReference type="EMBL" id="AE017042">
    <property type="protein sequence ID" value="AAS61268.1"/>
    <property type="molecule type" value="Genomic_DNA"/>
</dbReference>
<dbReference type="PIR" id="AE0140">
    <property type="entry name" value="AE0140"/>
</dbReference>
<dbReference type="RefSeq" id="WP_002210754.1">
    <property type="nucleotide sequence ID" value="NZ_WUCM01000016.1"/>
</dbReference>
<dbReference type="RefSeq" id="YP_002346182.1">
    <property type="nucleotide sequence ID" value="NC_003143.1"/>
</dbReference>
<dbReference type="SMR" id="P58497"/>
<dbReference type="IntAct" id="P58497">
    <property type="interactions" value="5"/>
</dbReference>
<dbReference type="STRING" id="214092.YPO1143"/>
<dbReference type="PaxDb" id="214092-YPO1143"/>
<dbReference type="DNASU" id="1147986"/>
<dbReference type="EnsemblBacteria" id="AAS61268">
    <property type="protein sequence ID" value="AAS61268"/>
    <property type="gene ID" value="YP_1017"/>
</dbReference>
<dbReference type="GeneID" id="57977282"/>
<dbReference type="KEGG" id="ype:YPO1143"/>
<dbReference type="KEGG" id="ypk:y3040"/>
<dbReference type="KEGG" id="ypm:YP_1017"/>
<dbReference type="PATRIC" id="fig|214092.21.peg.1438"/>
<dbReference type="eggNOG" id="COG2005">
    <property type="taxonomic scope" value="Bacteria"/>
</dbReference>
<dbReference type="eggNOG" id="COG3585">
    <property type="taxonomic scope" value="Bacteria"/>
</dbReference>
<dbReference type="HOGENOM" id="CLU_087839_0_0_6"/>
<dbReference type="OrthoDB" id="9800709at2"/>
<dbReference type="Proteomes" id="UP000000815">
    <property type="component" value="Chromosome"/>
</dbReference>
<dbReference type="Proteomes" id="UP000001019">
    <property type="component" value="Chromosome"/>
</dbReference>
<dbReference type="Proteomes" id="UP000002490">
    <property type="component" value="Chromosome"/>
</dbReference>
<dbReference type="GO" id="GO:0005737">
    <property type="term" value="C:cytoplasm"/>
    <property type="evidence" value="ECO:0007669"/>
    <property type="project" value="UniProtKB-SubCell"/>
</dbReference>
<dbReference type="GO" id="GO:0000987">
    <property type="term" value="F:cis-regulatory region sequence-specific DNA binding"/>
    <property type="evidence" value="ECO:0000318"/>
    <property type="project" value="GO_Central"/>
</dbReference>
<dbReference type="GO" id="GO:0030151">
    <property type="term" value="F:molybdenum ion binding"/>
    <property type="evidence" value="ECO:0000318"/>
    <property type="project" value="GO_Central"/>
</dbReference>
<dbReference type="GO" id="GO:0015689">
    <property type="term" value="P:molybdate ion transport"/>
    <property type="evidence" value="ECO:0007669"/>
    <property type="project" value="InterPro"/>
</dbReference>
<dbReference type="GO" id="GO:0006355">
    <property type="term" value="P:regulation of DNA-templated transcription"/>
    <property type="evidence" value="ECO:0000318"/>
    <property type="project" value="GO_Central"/>
</dbReference>
<dbReference type="Gene3D" id="2.40.50.100">
    <property type="match status" value="2"/>
</dbReference>
<dbReference type="Gene3D" id="1.10.10.10">
    <property type="entry name" value="Winged helix-like DNA-binding domain superfamily/Winged helix DNA-binding domain"/>
    <property type="match status" value="1"/>
</dbReference>
<dbReference type="InterPro" id="IPR008995">
    <property type="entry name" value="Mo/tungstate-bd_C_term_dom"/>
</dbReference>
<dbReference type="InterPro" id="IPR016462">
    <property type="entry name" value="ModE"/>
</dbReference>
<dbReference type="InterPro" id="IPR003725">
    <property type="entry name" value="ModE-bd_N"/>
</dbReference>
<dbReference type="InterPro" id="IPR051815">
    <property type="entry name" value="Molybdate_resp_trans_reg"/>
</dbReference>
<dbReference type="InterPro" id="IPR004606">
    <property type="entry name" value="Mop_domain"/>
</dbReference>
<dbReference type="InterPro" id="IPR005116">
    <property type="entry name" value="Transp-assoc_OB_typ1"/>
</dbReference>
<dbReference type="InterPro" id="IPR036388">
    <property type="entry name" value="WH-like_DNA-bd_sf"/>
</dbReference>
<dbReference type="InterPro" id="IPR036390">
    <property type="entry name" value="WH_DNA-bd_sf"/>
</dbReference>
<dbReference type="NCBIfam" id="TIGR00637">
    <property type="entry name" value="ModE_repress"/>
    <property type="match status" value="1"/>
</dbReference>
<dbReference type="NCBIfam" id="TIGR00638">
    <property type="entry name" value="Mop"/>
    <property type="match status" value="1"/>
</dbReference>
<dbReference type="NCBIfam" id="NF007957">
    <property type="entry name" value="PRK10676.1"/>
    <property type="match status" value="1"/>
</dbReference>
<dbReference type="PANTHER" id="PTHR30432:SF1">
    <property type="entry name" value="DNA-BINDING TRANSCRIPTIONAL DUAL REGULATOR MODE"/>
    <property type="match status" value="1"/>
</dbReference>
<dbReference type="PANTHER" id="PTHR30432">
    <property type="entry name" value="TRANSCRIPTIONAL REGULATOR MODE"/>
    <property type="match status" value="1"/>
</dbReference>
<dbReference type="Pfam" id="PF03459">
    <property type="entry name" value="TOBE"/>
    <property type="match status" value="2"/>
</dbReference>
<dbReference type="PIRSF" id="PIRSF005763">
    <property type="entry name" value="Txn_reg_ModE"/>
    <property type="match status" value="1"/>
</dbReference>
<dbReference type="SUPFAM" id="SSF50331">
    <property type="entry name" value="MOP-like"/>
    <property type="match status" value="2"/>
</dbReference>
<dbReference type="SUPFAM" id="SSF46785">
    <property type="entry name" value="Winged helix' DNA-binding domain"/>
    <property type="match status" value="1"/>
</dbReference>
<dbReference type="PROSITE" id="PS51866">
    <property type="entry name" value="MOP"/>
    <property type="match status" value="2"/>
</dbReference>
<comment type="function">
    <text evidence="1">The ModE-Mo complex acts as a repressor of the modABC operon, involved in the transport of molybdate. Upon binding molybdate, the conformation of the protein changes, promoting dimerization of ModE-Mo. The protein dimer is then competent to bind a DNA region, upstream of the modABC operon. Also acts as an enhancer of the expression of genes coding for molybdoenzymes, both directly and indirectly (By similarity).</text>
</comment>
<comment type="subunit">
    <text evidence="1">Homodimer.</text>
</comment>
<comment type="subcellular location">
    <subcellularLocation>
        <location evidence="3">Cytoplasm</location>
    </subcellularLocation>
</comment>
<comment type="similarity">
    <text evidence="3">Belongs to the ModE family.</text>
</comment>
<comment type="sequence caution" evidence="3">
    <conflict type="erroneous initiation">
        <sequence resource="EMBL-CDS" id="AAM86590"/>
    </conflict>
</comment>
<feature type="chain" id="PRO_0000201129" description="Transcriptional regulator ModE">
    <location>
        <begin position="1"/>
        <end position="263"/>
    </location>
</feature>
<feature type="domain" description="Mop 1" evidence="2">
    <location>
        <begin position="123"/>
        <end position="190"/>
    </location>
</feature>
<feature type="domain" description="Mop 2" evidence="2">
    <location>
        <begin position="195"/>
        <end position="261"/>
    </location>
</feature>
<feature type="DNA-binding region" description="H-T-H motif" evidence="1">
    <location>
        <begin position="33"/>
        <end position="79"/>
    </location>
</feature>
<feature type="region of interest" description="I">
    <location>
        <begin position="1"/>
        <end position="120"/>
    </location>
</feature>
<feature type="region of interest" description="Required for dimer formation and molybdate binding" evidence="1">
    <location>
        <begin position="124"/>
        <end position="132"/>
    </location>
</feature>
<protein>
    <recommendedName>
        <fullName>Transcriptional regulator ModE</fullName>
    </recommendedName>
</protein>
<organism>
    <name type="scientific">Yersinia pestis</name>
    <dbReference type="NCBI Taxonomy" id="632"/>
    <lineage>
        <taxon>Bacteria</taxon>
        <taxon>Pseudomonadati</taxon>
        <taxon>Pseudomonadota</taxon>
        <taxon>Gammaproteobacteria</taxon>
        <taxon>Enterobacterales</taxon>
        <taxon>Yersiniaceae</taxon>
        <taxon>Yersinia</taxon>
    </lineage>
</organism>
<proteinExistence type="inferred from homology"/>
<name>MODE_YERPE</name>
<reference key="1">
    <citation type="journal article" date="2001" name="Nature">
        <title>Genome sequence of Yersinia pestis, the causative agent of plague.</title>
        <authorList>
            <person name="Parkhill J."/>
            <person name="Wren B.W."/>
            <person name="Thomson N.R."/>
            <person name="Titball R.W."/>
            <person name="Holden M.T.G."/>
            <person name="Prentice M.B."/>
            <person name="Sebaihia M."/>
            <person name="James K.D."/>
            <person name="Churcher C.M."/>
            <person name="Mungall K.L."/>
            <person name="Baker S."/>
            <person name="Basham D."/>
            <person name="Bentley S.D."/>
            <person name="Brooks K."/>
            <person name="Cerdeno-Tarraga A.-M."/>
            <person name="Chillingworth T."/>
            <person name="Cronin A."/>
            <person name="Davies R.M."/>
            <person name="Davis P."/>
            <person name="Dougan G."/>
            <person name="Feltwell T."/>
            <person name="Hamlin N."/>
            <person name="Holroyd S."/>
            <person name="Jagels K."/>
            <person name="Karlyshev A.V."/>
            <person name="Leather S."/>
            <person name="Moule S."/>
            <person name="Oyston P.C.F."/>
            <person name="Quail M.A."/>
            <person name="Rutherford K.M."/>
            <person name="Simmonds M."/>
            <person name="Skelton J."/>
            <person name="Stevens K."/>
            <person name="Whitehead S."/>
            <person name="Barrell B.G."/>
        </authorList>
    </citation>
    <scope>NUCLEOTIDE SEQUENCE [LARGE SCALE GENOMIC DNA]</scope>
    <source>
        <strain>CO-92 / Biovar Orientalis</strain>
    </source>
</reference>
<reference key="2">
    <citation type="journal article" date="2002" name="J. Bacteriol.">
        <title>Genome sequence of Yersinia pestis KIM.</title>
        <authorList>
            <person name="Deng W."/>
            <person name="Burland V."/>
            <person name="Plunkett G. III"/>
            <person name="Boutin A."/>
            <person name="Mayhew G.F."/>
            <person name="Liss P."/>
            <person name="Perna N.T."/>
            <person name="Rose D.J."/>
            <person name="Mau B."/>
            <person name="Zhou S."/>
            <person name="Schwartz D.C."/>
            <person name="Fetherston J.D."/>
            <person name="Lindler L.E."/>
            <person name="Brubaker R.R."/>
            <person name="Plano G.V."/>
            <person name="Straley S.C."/>
            <person name="McDonough K.A."/>
            <person name="Nilles M.L."/>
            <person name="Matson J.S."/>
            <person name="Blattner F.R."/>
            <person name="Perry R.D."/>
        </authorList>
    </citation>
    <scope>NUCLEOTIDE SEQUENCE [LARGE SCALE GENOMIC DNA]</scope>
    <source>
        <strain>KIM10+ / Biovar Mediaevalis</strain>
    </source>
</reference>
<reference key="3">
    <citation type="journal article" date="2004" name="DNA Res.">
        <title>Complete genome sequence of Yersinia pestis strain 91001, an isolate avirulent to humans.</title>
        <authorList>
            <person name="Song Y."/>
            <person name="Tong Z."/>
            <person name="Wang J."/>
            <person name="Wang L."/>
            <person name="Guo Z."/>
            <person name="Han Y."/>
            <person name="Zhang J."/>
            <person name="Pei D."/>
            <person name="Zhou D."/>
            <person name="Qin H."/>
            <person name="Pang X."/>
            <person name="Han Y."/>
            <person name="Zhai J."/>
            <person name="Li M."/>
            <person name="Cui B."/>
            <person name="Qi Z."/>
            <person name="Jin L."/>
            <person name="Dai R."/>
            <person name="Chen F."/>
            <person name="Li S."/>
            <person name="Ye C."/>
            <person name="Du Z."/>
            <person name="Lin W."/>
            <person name="Wang J."/>
            <person name="Yu J."/>
            <person name="Yang H."/>
            <person name="Wang J."/>
            <person name="Huang P."/>
            <person name="Yang R."/>
        </authorList>
    </citation>
    <scope>NUCLEOTIDE SEQUENCE [LARGE SCALE GENOMIC DNA]</scope>
    <source>
        <strain>91001 / Biovar Mediaevalis</strain>
    </source>
</reference>
<accession>P58497</accession>
<accession>Q0WHQ6</accession>